<proteinExistence type="inferred from homology"/>
<gene>
    <name evidence="1" type="primary">ribA</name>
    <name type="ordered locus">PTO0570</name>
</gene>
<sequence>MIEFYSKARLPSRFGSFEIYVFKNDENKDHAVIVHGDVRGKSDVPVRIHSECLTGDVLGSMRCDCRDQLIESLKYIGSQPYGMLIYMRQEGRGIGLLNKIRAYNLQDQGLDTVEANLEQGLPVDERKYDYAVDVIKYFNIESIQLITNNPEKLKYLEEHGIKITKRIPIIIPPTKFDEFYLETKRERMGHLF</sequence>
<name>RIBA_PICTO</name>
<protein>
    <recommendedName>
        <fullName evidence="1">GTP cyclohydrolase-2</fullName>
        <ecNumber evidence="1">3.5.4.25</ecNumber>
    </recommendedName>
    <alternativeName>
        <fullName evidence="1">GTP cyclohydrolase II</fullName>
    </alternativeName>
</protein>
<organism>
    <name type="scientific">Picrophilus torridus (strain ATCC 700027 / DSM 9790 / JCM 10055 / NBRC 100828 / KAW 2/3)</name>
    <dbReference type="NCBI Taxonomy" id="1122961"/>
    <lineage>
        <taxon>Archaea</taxon>
        <taxon>Methanobacteriati</taxon>
        <taxon>Thermoplasmatota</taxon>
        <taxon>Thermoplasmata</taxon>
        <taxon>Thermoplasmatales</taxon>
        <taxon>Picrophilaceae</taxon>
        <taxon>Picrophilus</taxon>
    </lineage>
</organism>
<dbReference type="EC" id="3.5.4.25" evidence="1"/>
<dbReference type="EMBL" id="AE017261">
    <property type="protein sequence ID" value="AAT43155.1"/>
    <property type="molecule type" value="Genomic_DNA"/>
</dbReference>
<dbReference type="RefSeq" id="WP_011177371.1">
    <property type="nucleotide sequence ID" value="NC_005877.1"/>
</dbReference>
<dbReference type="SMR" id="Q6L1J7"/>
<dbReference type="STRING" id="263820.PTO0570"/>
<dbReference type="PaxDb" id="263820-PTO0570"/>
<dbReference type="GeneID" id="2844731"/>
<dbReference type="KEGG" id="pto:PTO0570"/>
<dbReference type="PATRIC" id="fig|263820.9.peg.599"/>
<dbReference type="eggNOG" id="arCOG01321">
    <property type="taxonomic scope" value="Archaea"/>
</dbReference>
<dbReference type="HOGENOM" id="CLU_020273_2_1_2"/>
<dbReference type="InParanoid" id="Q6L1J7"/>
<dbReference type="OrthoDB" id="25735at2157"/>
<dbReference type="UniPathway" id="UPA00275">
    <property type="reaction ID" value="UER00400"/>
</dbReference>
<dbReference type="Proteomes" id="UP000000438">
    <property type="component" value="Chromosome"/>
</dbReference>
<dbReference type="GO" id="GO:0005829">
    <property type="term" value="C:cytosol"/>
    <property type="evidence" value="ECO:0007669"/>
    <property type="project" value="TreeGrafter"/>
</dbReference>
<dbReference type="GO" id="GO:0008686">
    <property type="term" value="F:3,4-dihydroxy-2-butanone-4-phosphate synthase activity"/>
    <property type="evidence" value="ECO:0007669"/>
    <property type="project" value="TreeGrafter"/>
</dbReference>
<dbReference type="GO" id="GO:0005525">
    <property type="term" value="F:GTP binding"/>
    <property type="evidence" value="ECO:0007669"/>
    <property type="project" value="UniProtKB-KW"/>
</dbReference>
<dbReference type="GO" id="GO:0003935">
    <property type="term" value="F:GTP cyclohydrolase II activity"/>
    <property type="evidence" value="ECO:0007669"/>
    <property type="project" value="UniProtKB-UniRule"/>
</dbReference>
<dbReference type="GO" id="GO:0008270">
    <property type="term" value="F:zinc ion binding"/>
    <property type="evidence" value="ECO:0007669"/>
    <property type="project" value="UniProtKB-UniRule"/>
</dbReference>
<dbReference type="GO" id="GO:0009231">
    <property type="term" value="P:riboflavin biosynthetic process"/>
    <property type="evidence" value="ECO:0007669"/>
    <property type="project" value="UniProtKB-UniRule"/>
</dbReference>
<dbReference type="CDD" id="cd00641">
    <property type="entry name" value="GTP_cyclohydro2"/>
    <property type="match status" value="1"/>
</dbReference>
<dbReference type="FunFam" id="3.40.50.10990:FF:000002">
    <property type="entry name" value="GTP cyclohydrolase-2"/>
    <property type="match status" value="1"/>
</dbReference>
<dbReference type="Gene3D" id="3.40.50.10990">
    <property type="entry name" value="GTP cyclohydrolase II"/>
    <property type="match status" value="1"/>
</dbReference>
<dbReference type="HAMAP" id="MF_00179">
    <property type="entry name" value="RibA"/>
    <property type="match status" value="1"/>
</dbReference>
<dbReference type="InterPro" id="IPR032677">
    <property type="entry name" value="GTP_cyclohydro_II"/>
</dbReference>
<dbReference type="InterPro" id="IPR000926">
    <property type="entry name" value="RibA"/>
</dbReference>
<dbReference type="InterPro" id="IPR036144">
    <property type="entry name" value="RibA-like_sf"/>
</dbReference>
<dbReference type="NCBIfam" id="NF001591">
    <property type="entry name" value="PRK00393.1"/>
    <property type="match status" value="1"/>
</dbReference>
<dbReference type="NCBIfam" id="TIGR00505">
    <property type="entry name" value="ribA"/>
    <property type="match status" value="1"/>
</dbReference>
<dbReference type="PANTHER" id="PTHR21327:SF18">
    <property type="entry name" value="3,4-DIHYDROXY-2-BUTANONE 4-PHOSPHATE SYNTHASE"/>
    <property type="match status" value="1"/>
</dbReference>
<dbReference type="PANTHER" id="PTHR21327">
    <property type="entry name" value="GTP CYCLOHYDROLASE II-RELATED"/>
    <property type="match status" value="1"/>
</dbReference>
<dbReference type="Pfam" id="PF00925">
    <property type="entry name" value="GTP_cyclohydro2"/>
    <property type="match status" value="1"/>
</dbReference>
<dbReference type="SUPFAM" id="SSF142695">
    <property type="entry name" value="RibA-like"/>
    <property type="match status" value="1"/>
</dbReference>
<feature type="chain" id="PRO_1000071648" description="GTP cyclohydrolase-2">
    <location>
        <begin position="1"/>
        <end position="192"/>
    </location>
</feature>
<feature type="active site" description="Proton acceptor" evidence="1">
    <location>
        <position position="124"/>
    </location>
</feature>
<feature type="active site" description="Nucleophile" evidence="1">
    <location>
        <position position="126"/>
    </location>
</feature>
<feature type="binding site" evidence="1">
    <location>
        <begin position="47"/>
        <end position="51"/>
    </location>
    <ligand>
        <name>GTP</name>
        <dbReference type="ChEBI" id="CHEBI:37565"/>
    </ligand>
</feature>
<feature type="binding site" evidence="1">
    <location>
        <position position="52"/>
    </location>
    <ligand>
        <name>Zn(2+)</name>
        <dbReference type="ChEBI" id="CHEBI:29105"/>
        <note>catalytic</note>
    </ligand>
</feature>
<feature type="binding site" evidence="1">
    <location>
        <position position="63"/>
    </location>
    <ligand>
        <name>Zn(2+)</name>
        <dbReference type="ChEBI" id="CHEBI:29105"/>
        <note>catalytic</note>
    </ligand>
</feature>
<feature type="binding site" evidence="1">
    <location>
        <position position="65"/>
    </location>
    <ligand>
        <name>Zn(2+)</name>
        <dbReference type="ChEBI" id="CHEBI:29105"/>
        <note>catalytic</note>
    </ligand>
</feature>
<feature type="binding site" evidence="1">
    <location>
        <position position="68"/>
    </location>
    <ligand>
        <name>GTP</name>
        <dbReference type="ChEBI" id="CHEBI:37565"/>
    </ligand>
</feature>
<feature type="binding site" evidence="1">
    <location>
        <begin position="90"/>
        <end position="92"/>
    </location>
    <ligand>
        <name>GTP</name>
        <dbReference type="ChEBI" id="CHEBI:37565"/>
    </ligand>
</feature>
<feature type="binding site" evidence="1">
    <location>
        <position position="112"/>
    </location>
    <ligand>
        <name>GTP</name>
        <dbReference type="ChEBI" id="CHEBI:37565"/>
    </ligand>
</feature>
<feature type="binding site" evidence="1">
    <location>
        <position position="147"/>
    </location>
    <ligand>
        <name>GTP</name>
        <dbReference type="ChEBI" id="CHEBI:37565"/>
    </ligand>
</feature>
<feature type="binding site" evidence="1">
    <location>
        <position position="152"/>
    </location>
    <ligand>
        <name>GTP</name>
        <dbReference type="ChEBI" id="CHEBI:37565"/>
    </ligand>
</feature>
<accession>Q6L1J7</accession>
<keyword id="KW-0342">GTP-binding</keyword>
<keyword id="KW-0378">Hydrolase</keyword>
<keyword id="KW-0479">Metal-binding</keyword>
<keyword id="KW-0547">Nucleotide-binding</keyword>
<keyword id="KW-0686">Riboflavin biosynthesis</keyword>
<keyword id="KW-0862">Zinc</keyword>
<comment type="function">
    <text evidence="1">Catalyzes the conversion of GTP to 2,5-diamino-6-ribosylamino-4(3H)-pyrimidinone 5'-phosphate (DARP), formate and pyrophosphate.</text>
</comment>
<comment type="catalytic activity">
    <reaction evidence="1">
        <text>GTP + 4 H2O = 2,5-diamino-6-hydroxy-4-(5-phosphoribosylamino)-pyrimidine + formate + 2 phosphate + 3 H(+)</text>
        <dbReference type="Rhea" id="RHEA:23704"/>
        <dbReference type="ChEBI" id="CHEBI:15377"/>
        <dbReference type="ChEBI" id="CHEBI:15378"/>
        <dbReference type="ChEBI" id="CHEBI:15740"/>
        <dbReference type="ChEBI" id="CHEBI:37565"/>
        <dbReference type="ChEBI" id="CHEBI:43474"/>
        <dbReference type="ChEBI" id="CHEBI:58614"/>
        <dbReference type="EC" id="3.5.4.25"/>
    </reaction>
</comment>
<comment type="cofactor">
    <cofactor evidence="1">
        <name>Zn(2+)</name>
        <dbReference type="ChEBI" id="CHEBI:29105"/>
    </cofactor>
    <text evidence="1">Binds 1 zinc ion per subunit.</text>
</comment>
<comment type="pathway">
    <text evidence="1">Cofactor biosynthesis; riboflavin biosynthesis; 5-amino-6-(D-ribitylamino)uracil from GTP: step 1/4.</text>
</comment>
<comment type="similarity">
    <text evidence="1">Belongs to the GTP cyclohydrolase II family.</text>
</comment>
<reference key="1">
    <citation type="journal article" date="2004" name="Proc. Natl. Acad. Sci. U.S.A.">
        <title>Genome sequence of Picrophilus torridus and its implications for life around pH 0.</title>
        <authorList>
            <person name="Fuetterer O."/>
            <person name="Angelov A."/>
            <person name="Liesegang H."/>
            <person name="Gottschalk G."/>
            <person name="Schleper C."/>
            <person name="Schepers B."/>
            <person name="Dock C."/>
            <person name="Antranikian G."/>
            <person name="Liebl W."/>
        </authorList>
    </citation>
    <scope>NUCLEOTIDE SEQUENCE [LARGE SCALE GENOMIC DNA]</scope>
    <source>
        <strain>ATCC 700027 / DSM 9790 / JCM 10055 / NBRC 100828 / KAW 2/3</strain>
    </source>
</reference>
<evidence type="ECO:0000255" key="1">
    <source>
        <dbReference type="HAMAP-Rule" id="MF_00179"/>
    </source>
</evidence>